<evidence type="ECO:0000250" key="1"/>
<evidence type="ECO:0000255" key="2">
    <source>
        <dbReference type="PROSITE-ProRule" id="PRU01026"/>
    </source>
</evidence>
<comment type="function">
    <text evidence="1">This protein produces a dimethylation of the adenine residue at position 2085 in 23S rRNA, resulting in reduced affinity between ribosomes and macrolide-lincosamide-streptogramin B antibiotics.</text>
</comment>
<comment type="catalytic activity">
    <reaction>
        <text>adenosine(2085) in 23S rRNA + 2 S-adenosyl-L-methionine = N(6)-dimethyladenosine(2085) in 23S rRNA + 2 S-adenosyl-L-homocysteine + 2 H(+)</text>
        <dbReference type="Rhea" id="RHEA:42784"/>
        <dbReference type="Rhea" id="RHEA-COMP:10237"/>
        <dbReference type="Rhea" id="RHEA-COMP:10238"/>
        <dbReference type="ChEBI" id="CHEBI:15378"/>
        <dbReference type="ChEBI" id="CHEBI:57856"/>
        <dbReference type="ChEBI" id="CHEBI:59789"/>
        <dbReference type="ChEBI" id="CHEBI:74411"/>
        <dbReference type="ChEBI" id="CHEBI:74493"/>
        <dbReference type="EC" id="2.1.1.184"/>
    </reaction>
</comment>
<comment type="similarity">
    <text evidence="2">Belongs to the class I-like SAM-binding methyltransferase superfamily. rRNA adenine N(6)-methyltransferase family.</text>
</comment>
<accession>P0A0H1</accession>
<accession>P06699</accession>
<organism>
    <name type="scientific">Staphylococcus aureus (strain Mu50 / ATCC 700699)</name>
    <dbReference type="NCBI Taxonomy" id="158878"/>
    <lineage>
        <taxon>Bacteria</taxon>
        <taxon>Bacillati</taxon>
        <taxon>Bacillota</taxon>
        <taxon>Bacilli</taxon>
        <taxon>Bacillales</taxon>
        <taxon>Staphylococcaceae</taxon>
        <taxon>Staphylococcus</taxon>
    </lineage>
</organism>
<keyword id="KW-0046">Antibiotic resistance</keyword>
<keyword id="KW-0489">Methyltransferase</keyword>
<keyword id="KW-0694">RNA-binding</keyword>
<keyword id="KW-0949">S-adenosyl-L-methionine</keyword>
<keyword id="KW-0808">Transferase</keyword>
<gene>
    <name type="primary">ermA1</name>
    <name type="ordered locus">SAV0052</name>
</gene>
<gene>
    <name type="primary">ermA2</name>
    <name type="ordered locus">SAV1655</name>
</gene>
<reference key="1">
    <citation type="journal article" date="2001" name="Lancet">
        <title>Whole genome sequencing of meticillin-resistant Staphylococcus aureus.</title>
        <authorList>
            <person name="Kuroda M."/>
            <person name="Ohta T."/>
            <person name="Uchiyama I."/>
            <person name="Baba T."/>
            <person name="Yuzawa H."/>
            <person name="Kobayashi I."/>
            <person name="Cui L."/>
            <person name="Oguchi A."/>
            <person name="Aoki K."/>
            <person name="Nagai Y."/>
            <person name="Lian J.-Q."/>
            <person name="Ito T."/>
            <person name="Kanamori M."/>
            <person name="Matsumaru H."/>
            <person name="Maruyama A."/>
            <person name="Murakami H."/>
            <person name="Hosoyama A."/>
            <person name="Mizutani-Ui Y."/>
            <person name="Takahashi N.K."/>
            <person name="Sawano T."/>
            <person name="Inoue R."/>
            <person name="Kaito C."/>
            <person name="Sekimizu K."/>
            <person name="Hirakawa H."/>
            <person name="Kuhara S."/>
            <person name="Goto S."/>
            <person name="Yabuzaki J."/>
            <person name="Kanehisa M."/>
            <person name="Yamashita A."/>
            <person name="Oshima K."/>
            <person name="Furuya K."/>
            <person name="Yoshino C."/>
            <person name="Shiba T."/>
            <person name="Hattori M."/>
            <person name="Ogasawara N."/>
            <person name="Hayashi H."/>
            <person name="Hiramatsu K."/>
        </authorList>
    </citation>
    <scope>NUCLEOTIDE SEQUENCE [LARGE SCALE GENOMIC DNA]</scope>
    <source>
        <strain>Mu50 / ATCC 700699</strain>
    </source>
</reference>
<proteinExistence type="inferred from homology"/>
<name>ERMA_STAAM</name>
<dbReference type="EC" id="2.1.1.184"/>
<dbReference type="EMBL" id="BA000017">
    <property type="protein sequence ID" value="BAB56214.1"/>
    <property type="molecule type" value="Genomic_DNA"/>
</dbReference>
<dbReference type="EMBL" id="BA000017">
    <property type="protein sequence ID" value="BAB57817.1"/>
    <property type="molecule type" value="Genomic_DNA"/>
</dbReference>
<dbReference type="SMR" id="P0A0H1"/>
<dbReference type="KEGG" id="sav:SAV0052"/>
<dbReference type="KEGG" id="sav:SAV1655"/>
<dbReference type="HOGENOM" id="CLU_041220_3_3_9"/>
<dbReference type="PhylomeDB" id="P0A0H1"/>
<dbReference type="Proteomes" id="UP000002481">
    <property type="component" value="Chromosome"/>
</dbReference>
<dbReference type="GO" id="GO:0005829">
    <property type="term" value="C:cytosol"/>
    <property type="evidence" value="ECO:0007669"/>
    <property type="project" value="TreeGrafter"/>
</dbReference>
<dbReference type="GO" id="GO:0052910">
    <property type="term" value="F:23S rRNA (adenine(2085)-N(6))-dimethyltransferase activity"/>
    <property type="evidence" value="ECO:0007669"/>
    <property type="project" value="UniProtKB-EC"/>
</dbReference>
<dbReference type="GO" id="GO:0003723">
    <property type="term" value="F:RNA binding"/>
    <property type="evidence" value="ECO:0007669"/>
    <property type="project" value="UniProtKB-KW"/>
</dbReference>
<dbReference type="GO" id="GO:0000179">
    <property type="term" value="F:rRNA (adenine-N6,N6-)-dimethyltransferase activity"/>
    <property type="evidence" value="ECO:0007669"/>
    <property type="project" value="InterPro"/>
</dbReference>
<dbReference type="GO" id="GO:0046677">
    <property type="term" value="P:response to antibiotic"/>
    <property type="evidence" value="ECO:0007669"/>
    <property type="project" value="UniProtKB-KW"/>
</dbReference>
<dbReference type="CDD" id="cd02440">
    <property type="entry name" value="AdoMet_MTases"/>
    <property type="match status" value="1"/>
</dbReference>
<dbReference type="Gene3D" id="1.10.8.100">
    <property type="entry name" value="Ribosomal RNA adenine dimethylase-like, domain 2"/>
    <property type="match status" value="1"/>
</dbReference>
<dbReference type="Gene3D" id="3.40.50.150">
    <property type="entry name" value="Vaccinia Virus protein VP39"/>
    <property type="match status" value="1"/>
</dbReference>
<dbReference type="InterPro" id="IPR001737">
    <property type="entry name" value="KsgA/Erm"/>
</dbReference>
<dbReference type="InterPro" id="IPR023165">
    <property type="entry name" value="rRNA_Ade_diMease-like_C"/>
</dbReference>
<dbReference type="InterPro" id="IPR020596">
    <property type="entry name" value="rRNA_Ade_Mease_Trfase_CS"/>
</dbReference>
<dbReference type="InterPro" id="IPR020598">
    <property type="entry name" value="rRNA_Ade_methylase_Trfase_N"/>
</dbReference>
<dbReference type="InterPro" id="IPR029063">
    <property type="entry name" value="SAM-dependent_MTases_sf"/>
</dbReference>
<dbReference type="NCBIfam" id="NF000499">
    <property type="entry name" value="Erm23S_rRNA_broad"/>
    <property type="match status" value="1"/>
</dbReference>
<dbReference type="NCBIfam" id="NF012222">
    <property type="entry name" value="erm_A_23S_MT"/>
    <property type="match status" value="1"/>
</dbReference>
<dbReference type="PANTHER" id="PTHR11727">
    <property type="entry name" value="DIMETHYLADENOSINE TRANSFERASE"/>
    <property type="match status" value="1"/>
</dbReference>
<dbReference type="PANTHER" id="PTHR11727:SF7">
    <property type="entry name" value="DIMETHYLADENOSINE TRANSFERASE-RELATED"/>
    <property type="match status" value="1"/>
</dbReference>
<dbReference type="Pfam" id="PF00398">
    <property type="entry name" value="RrnaAD"/>
    <property type="match status" value="1"/>
</dbReference>
<dbReference type="SMART" id="SM00650">
    <property type="entry name" value="rADc"/>
    <property type="match status" value="1"/>
</dbReference>
<dbReference type="SUPFAM" id="SSF53335">
    <property type="entry name" value="S-adenosyl-L-methionine-dependent methyltransferases"/>
    <property type="match status" value="1"/>
</dbReference>
<dbReference type="PROSITE" id="PS01131">
    <property type="entry name" value="RRNA_A_DIMETH"/>
    <property type="match status" value="1"/>
</dbReference>
<dbReference type="PROSITE" id="PS51689">
    <property type="entry name" value="SAM_RNA_A_N6_MT"/>
    <property type="match status" value="1"/>
</dbReference>
<protein>
    <recommendedName>
        <fullName>rRNA adenine N-6-methyltransferase</fullName>
        <ecNumber>2.1.1.184</ecNumber>
    </recommendedName>
    <alternativeName>
        <fullName>Erythromycin resistance protein</fullName>
    </alternativeName>
    <alternativeName>
        <fullName>Macrolide-lincosamide-streptogramin B resistance protein</fullName>
    </alternativeName>
</protein>
<sequence>MNQKNPKDTQNFITSKKHVKEILNHTNISKQDNVIEIGSGKGHFTKELVKMSRSVTAIEIDGGLCQVTKEAVNPSENIKVIQTDILKFSFPKHINYKIYGNIPYNISTDIVKRITFESQAKYSYLIVEKGFAKRLQNLQRALGLLLMVEMDIKMLKKVPPLYFHPKPSVDSVLIVLERHQPLISKKDYKKYRSFVYKWVNREYRVLFTKNQFRQALKHANVTNINKLSKEQFLSIFNSYKLFH</sequence>
<feature type="chain" id="PRO_0000101678" description="rRNA adenine N-6-methyltransferase">
    <location>
        <begin position="1"/>
        <end position="243"/>
    </location>
</feature>
<feature type="binding site" evidence="2">
    <location>
        <position position="11"/>
    </location>
    <ligand>
        <name>S-adenosyl-L-methionine</name>
        <dbReference type="ChEBI" id="CHEBI:59789"/>
    </ligand>
</feature>
<feature type="binding site" evidence="2">
    <location>
        <position position="13"/>
    </location>
    <ligand>
        <name>S-adenosyl-L-methionine</name>
        <dbReference type="ChEBI" id="CHEBI:59789"/>
    </ligand>
</feature>
<feature type="binding site" evidence="2">
    <location>
        <position position="38"/>
    </location>
    <ligand>
        <name>S-adenosyl-L-methionine</name>
        <dbReference type="ChEBI" id="CHEBI:59789"/>
    </ligand>
</feature>
<feature type="binding site" evidence="2">
    <location>
        <position position="59"/>
    </location>
    <ligand>
        <name>S-adenosyl-L-methionine</name>
        <dbReference type="ChEBI" id="CHEBI:59789"/>
    </ligand>
</feature>
<feature type="binding site" evidence="2">
    <location>
        <position position="84"/>
    </location>
    <ligand>
        <name>S-adenosyl-L-methionine</name>
        <dbReference type="ChEBI" id="CHEBI:59789"/>
    </ligand>
</feature>
<feature type="binding site" evidence="2">
    <location>
        <position position="101"/>
    </location>
    <ligand>
        <name>S-adenosyl-L-methionine</name>
        <dbReference type="ChEBI" id="CHEBI:59789"/>
    </ligand>
</feature>